<reference key="1">
    <citation type="journal article" date="1994" name="Nature">
        <title>2.2 Mb of contiguous nucleotide sequence from chromosome III of C. elegans.</title>
        <authorList>
            <person name="Wilson R."/>
            <person name="Ainscough R."/>
            <person name="Anderson K."/>
            <person name="Baynes C."/>
            <person name="Berks M."/>
            <person name="Bonfield J."/>
            <person name="Burton J."/>
            <person name="Connell M."/>
            <person name="Copsey T."/>
            <person name="Cooper J."/>
            <person name="Coulson A."/>
            <person name="Craxton M."/>
            <person name="Dear S."/>
            <person name="Du Z."/>
            <person name="Durbin R."/>
            <person name="Favello A."/>
            <person name="Fraser A."/>
            <person name="Fulton L."/>
            <person name="Gardner A."/>
            <person name="Green P."/>
            <person name="Hawkins T."/>
            <person name="Hillier L."/>
            <person name="Jier M."/>
            <person name="Johnston L."/>
            <person name="Jones M."/>
            <person name="Kershaw J."/>
            <person name="Kirsten J."/>
            <person name="Laisster N."/>
            <person name="Latreille P."/>
            <person name="Lightning J."/>
            <person name="Lloyd C."/>
            <person name="Mortimore B."/>
            <person name="O'Callaghan M."/>
            <person name="Parsons J."/>
            <person name="Percy C."/>
            <person name="Rifken L."/>
            <person name="Roopra A."/>
            <person name="Saunders D."/>
            <person name="Shownkeen R."/>
            <person name="Sims M."/>
            <person name="Smaldon N."/>
            <person name="Smith A."/>
            <person name="Smith M."/>
            <person name="Sonnhammer E."/>
            <person name="Staden R."/>
            <person name="Sulston J."/>
            <person name="Thierry-Mieg J."/>
            <person name="Thomas K."/>
            <person name="Vaudin M."/>
            <person name="Vaughan K."/>
            <person name="Waterston R."/>
            <person name="Watson A."/>
            <person name="Weinstock L."/>
            <person name="Wilkinson-Sproat J."/>
            <person name="Wohldman P."/>
        </authorList>
    </citation>
    <scope>NUCLEOTIDE SEQUENCE [LARGE SCALE GENOMIC DNA]</scope>
    <source>
        <strain>Bristol N2</strain>
    </source>
</reference>
<reference key="2">
    <citation type="journal article" date="1998" name="Science">
        <title>Genome sequence of the nematode C. elegans: a platform for investigating biology.</title>
        <authorList>
            <consortium name="The C. elegans sequencing consortium"/>
        </authorList>
    </citation>
    <scope>NUCLEOTIDE SEQUENCE [LARGE SCALE GENOMIC DNA]</scope>
    <source>
        <strain>Bristol N2</strain>
    </source>
</reference>
<dbReference type="EC" id="5.3.4.1"/>
<dbReference type="EMBL" id="FO080531">
    <property type="protein sequence ID" value="CCD64436.1"/>
    <property type="molecule type" value="Genomic_DNA"/>
</dbReference>
<dbReference type="PIR" id="S44756">
    <property type="entry name" value="S44756"/>
</dbReference>
<dbReference type="RefSeq" id="NP_498775.2">
    <property type="nucleotide sequence ID" value="NM_066374.7"/>
</dbReference>
<dbReference type="SMR" id="P34329"/>
<dbReference type="BioGRID" id="41353">
    <property type="interactions" value="13"/>
</dbReference>
<dbReference type="FunCoup" id="P34329">
    <property type="interactions" value="292"/>
</dbReference>
<dbReference type="STRING" id="6239.C14B9.2.1"/>
<dbReference type="PaxDb" id="6239-C14B9.2"/>
<dbReference type="PeptideAtlas" id="P34329"/>
<dbReference type="EnsemblMetazoa" id="C14B9.2.1">
    <property type="protein sequence ID" value="C14B9.2.1"/>
    <property type="gene ID" value="WBGene00015752"/>
</dbReference>
<dbReference type="GeneID" id="176147"/>
<dbReference type="KEGG" id="cel:CELE_C14B9.2"/>
<dbReference type="UCSC" id="C14B9.2.1">
    <property type="organism name" value="c. elegans"/>
</dbReference>
<dbReference type="AGR" id="WB:WBGene00015752"/>
<dbReference type="CTD" id="176147"/>
<dbReference type="WormBase" id="C14B9.2">
    <property type="protein sequence ID" value="CE30601"/>
    <property type="gene ID" value="WBGene00015752"/>
</dbReference>
<dbReference type="eggNOG" id="KOG0190">
    <property type="taxonomic scope" value="Eukaryota"/>
</dbReference>
<dbReference type="HOGENOM" id="CLU_025879_6_2_1"/>
<dbReference type="InParanoid" id="P34329"/>
<dbReference type="OMA" id="FRSKHEP"/>
<dbReference type="OrthoDB" id="427280at2759"/>
<dbReference type="PhylomeDB" id="P34329"/>
<dbReference type="PRO" id="PR:P34329"/>
<dbReference type="Proteomes" id="UP000001940">
    <property type="component" value="Chromosome III"/>
</dbReference>
<dbReference type="Bgee" id="WBGene00015752">
    <property type="expression patterns" value="Expressed in pharyngeal muscle cell (C elegans) and 4 other cell types or tissues"/>
</dbReference>
<dbReference type="GO" id="GO:0009986">
    <property type="term" value="C:cell surface"/>
    <property type="evidence" value="ECO:0000318"/>
    <property type="project" value="GO_Central"/>
</dbReference>
<dbReference type="GO" id="GO:0005783">
    <property type="term" value="C:endoplasmic reticulum"/>
    <property type="evidence" value="ECO:0000318"/>
    <property type="project" value="GO_Central"/>
</dbReference>
<dbReference type="GO" id="GO:0005788">
    <property type="term" value="C:endoplasmic reticulum lumen"/>
    <property type="evidence" value="ECO:0007669"/>
    <property type="project" value="UniProtKB-SubCell"/>
</dbReference>
<dbReference type="GO" id="GO:0003756">
    <property type="term" value="F:protein disulfide isomerase activity"/>
    <property type="evidence" value="ECO:0000318"/>
    <property type="project" value="GO_Central"/>
</dbReference>
<dbReference type="GO" id="GO:0030968">
    <property type="term" value="P:endoplasmic reticulum unfolded protein response"/>
    <property type="evidence" value="ECO:0007007"/>
    <property type="project" value="WormBase"/>
</dbReference>
<dbReference type="GO" id="GO:0036498">
    <property type="term" value="P:IRE1-mediated unfolded protein response"/>
    <property type="evidence" value="ECO:0007007"/>
    <property type="project" value="WormBase"/>
</dbReference>
<dbReference type="GO" id="GO:0006457">
    <property type="term" value="P:protein folding"/>
    <property type="evidence" value="ECO:0000318"/>
    <property type="project" value="GO_Central"/>
</dbReference>
<dbReference type="GO" id="GO:0034976">
    <property type="term" value="P:response to endoplasmic reticulum stress"/>
    <property type="evidence" value="ECO:0000318"/>
    <property type="project" value="GO_Central"/>
</dbReference>
<dbReference type="CDD" id="cd02961">
    <property type="entry name" value="PDI_a_family"/>
    <property type="match status" value="2"/>
</dbReference>
<dbReference type="CDD" id="cd02995">
    <property type="entry name" value="PDI_a_PDI_a'_C"/>
    <property type="match status" value="1"/>
</dbReference>
<dbReference type="CDD" id="cd03073">
    <property type="entry name" value="PDI_b'_ERp72_ERp57"/>
    <property type="match status" value="1"/>
</dbReference>
<dbReference type="FunFam" id="3.40.30.10:FF:000017">
    <property type="entry name" value="Protein disulfide-isomerase A4"/>
    <property type="match status" value="1"/>
</dbReference>
<dbReference type="FunFam" id="3.40.30.10:FF:000067">
    <property type="entry name" value="Protein disulfide-isomerase A4"/>
    <property type="match status" value="1"/>
</dbReference>
<dbReference type="FunFam" id="3.40.30.10:FF:000403">
    <property type="entry name" value="Protein disulfide-isomerase A4"/>
    <property type="match status" value="1"/>
</dbReference>
<dbReference type="FunFam" id="3.40.30.10:FF:000427">
    <property type="entry name" value="Protein disulfide-isomerase A4"/>
    <property type="match status" value="1"/>
</dbReference>
<dbReference type="FunFam" id="3.40.30.10:FF:000428">
    <property type="entry name" value="Protein disulfide-isomerase A4"/>
    <property type="match status" value="1"/>
</dbReference>
<dbReference type="Gene3D" id="3.40.30.10">
    <property type="entry name" value="Glutaredoxin"/>
    <property type="match status" value="5"/>
</dbReference>
<dbReference type="InterPro" id="IPR005788">
    <property type="entry name" value="PDI_thioredoxin-like_dom"/>
</dbReference>
<dbReference type="InterPro" id="IPR005792">
    <property type="entry name" value="Prot_disulphide_isomerase"/>
</dbReference>
<dbReference type="InterPro" id="IPR017068">
    <property type="entry name" value="Protein_diS-isomerase_A4"/>
</dbReference>
<dbReference type="InterPro" id="IPR036249">
    <property type="entry name" value="Thioredoxin-like_sf"/>
</dbReference>
<dbReference type="InterPro" id="IPR017937">
    <property type="entry name" value="Thioredoxin_CS"/>
</dbReference>
<dbReference type="InterPro" id="IPR013766">
    <property type="entry name" value="Thioredoxin_domain"/>
</dbReference>
<dbReference type="NCBIfam" id="TIGR01130">
    <property type="entry name" value="ER_PDI_fam"/>
    <property type="match status" value="1"/>
</dbReference>
<dbReference type="NCBIfam" id="TIGR01126">
    <property type="entry name" value="pdi_dom"/>
    <property type="match status" value="3"/>
</dbReference>
<dbReference type="PANTHER" id="PTHR18929">
    <property type="entry name" value="PROTEIN DISULFIDE ISOMERASE"/>
    <property type="match status" value="1"/>
</dbReference>
<dbReference type="PANTHER" id="PTHR18929:SF210">
    <property type="entry name" value="PROTEIN DISULFIDE-ISOMERASE A4"/>
    <property type="match status" value="1"/>
</dbReference>
<dbReference type="Pfam" id="PF00085">
    <property type="entry name" value="Thioredoxin"/>
    <property type="match status" value="3"/>
</dbReference>
<dbReference type="Pfam" id="PF13848">
    <property type="entry name" value="Thioredoxin_6"/>
    <property type="match status" value="1"/>
</dbReference>
<dbReference type="PIRSF" id="PIRSF036862">
    <property type="entry name" value="Disulphide_isom_A4"/>
    <property type="match status" value="1"/>
</dbReference>
<dbReference type="PRINTS" id="PR00421">
    <property type="entry name" value="THIOREDOXIN"/>
</dbReference>
<dbReference type="SUPFAM" id="SSF52833">
    <property type="entry name" value="Thioredoxin-like"/>
    <property type="match status" value="5"/>
</dbReference>
<dbReference type="PROSITE" id="PS00014">
    <property type="entry name" value="ER_TARGET"/>
    <property type="match status" value="1"/>
</dbReference>
<dbReference type="PROSITE" id="PS00194">
    <property type="entry name" value="THIOREDOXIN_1"/>
    <property type="match status" value="3"/>
</dbReference>
<dbReference type="PROSITE" id="PS51352">
    <property type="entry name" value="THIOREDOXIN_2"/>
    <property type="match status" value="3"/>
</dbReference>
<evidence type="ECO:0000255" key="1"/>
<evidence type="ECO:0000255" key="2">
    <source>
        <dbReference type="PROSITE-ProRule" id="PRU00691"/>
    </source>
</evidence>
<evidence type="ECO:0000255" key="3">
    <source>
        <dbReference type="PROSITE-ProRule" id="PRU10138"/>
    </source>
</evidence>
<evidence type="ECO:0000305" key="4"/>
<name>PDIA4_CAEEL</name>
<gene>
    <name type="ORF">C14B9.2</name>
</gene>
<protein>
    <recommendedName>
        <fullName>Probable protein disulfide-isomerase A4</fullName>
        <ecNumber>5.3.4.1</ecNumber>
    </recommendedName>
    <alternativeName>
        <fullName>ERp-72 homolog</fullName>
    </alternativeName>
</protein>
<accession>P34329</accession>
<comment type="catalytic activity">
    <reaction>
        <text>Catalyzes the rearrangement of -S-S- bonds in proteins.</text>
        <dbReference type="EC" id="5.3.4.1"/>
    </reaction>
</comment>
<comment type="subcellular location">
    <subcellularLocation>
        <location evidence="3">Endoplasmic reticulum lumen</location>
    </subcellularLocation>
</comment>
<comment type="similarity">
    <text evidence="4">Belongs to the protein disulfide isomerase family.</text>
</comment>
<feature type="signal peptide" evidence="1">
    <location>
        <begin position="1"/>
        <end position="21"/>
    </location>
</feature>
<feature type="chain" id="PRO_0000034232" description="Probable protein disulfide-isomerase A4">
    <location>
        <begin position="22"/>
        <end position="618"/>
    </location>
</feature>
<feature type="domain" description="Thioredoxin 1" evidence="2">
    <location>
        <begin position="22"/>
        <end position="139"/>
    </location>
</feature>
<feature type="domain" description="Thioredoxin 2" evidence="2">
    <location>
        <begin position="138"/>
        <end position="254"/>
    </location>
</feature>
<feature type="domain" description="Thioredoxin 3" evidence="2">
    <location>
        <begin position="480"/>
        <end position="609"/>
    </location>
</feature>
<feature type="short sequence motif" description="Prevents secretion from ER">
    <location>
        <begin position="615"/>
        <end position="618"/>
    </location>
</feature>
<feature type="disulfide bond" description="Redox-active" evidence="2">
    <location>
        <begin position="65"/>
        <end position="68"/>
    </location>
</feature>
<feature type="disulfide bond" description="Redox-active" evidence="2">
    <location>
        <begin position="176"/>
        <end position="179"/>
    </location>
</feature>
<feature type="disulfide bond" description="Redox-active" evidence="2">
    <location>
        <begin position="529"/>
        <end position="532"/>
    </location>
</feature>
<keyword id="KW-1015">Disulfide bond</keyword>
<keyword id="KW-0256">Endoplasmic reticulum</keyword>
<keyword id="KW-0413">Isomerase</keyword>
<keyword id="KW-0676">Redox-active center</keyword>
<keyword id="KW-1185">Reference proteome</keyword>
<keyword id="KW-0677">Repeat</keyword>
<keyword id="KW-0732">Signal</keyword>
<proteinExistence type="inferred from homology"/>
<sequence>MMFDRRFFALVVLLCVSAVRSTEDASDDELNYEMDEGVVVLTDKNFDAFLKKNPSVLVKFYAPWCGHCKHLAPEYEKASSKVSIPLAKVDATVETELGKRFEIQGYPTLKFWKDGKGPNDYDGGRDEAGIVEWVESRVDPNYKPPPEEVVTLTTENFDDFISNNELVLVEFYAPWCGHCKKLAPEYEKAAQKLKAQGSKVKLGKVDATIEKDLGTKYGVSGYPTMKIIRNGRRFDYNGPREAAGIIKYMTDQSKPAAKKLPKLKDVERFMSKDDVTIIGFFATEDSTAFEAFSDSAEMLREEFKTMGHTSDPAAFKKWDAKPNDIIIFYPSLFHSKFEPKSRTYNKAAATSEDLLAFFREHSAPLVGKMTKKNAATRYTKKPLVVVYYNADFSVQYREGSEYWRSKVLNIAQKYQKDKYKFAVADEEEFAKELEELGLGDSGLEHNVVVFGYDGKKYPMNPDEFDGELDENLEAFMKQISSGKAKAHVKSAPAPKDDKGPVKTVVGSNFDKIVNDESKDVLIEFYAPWCGHCKSFESKYVELAQALKKTQPNVVLAKMDATINDAPSQFAVEGFPTIYFAPAGKKSEPIKYSGNRDLEDLKKFMTKHGVKSFQKKDEL</sequence>
<organism>
    <name type="scientific">Caenorhabditis elegans</name>
    <dbReference type="NCBI Taxonomy" id="6239"/>
    <lineage>
        <taxon>Eukaryota</taxon>
        <taxon>Metazoa</taxon>
        <taxon>Ecdysozoa</taxon>
        <taxon>Nematoda</taxon>
        <taxon>Chromadorea</taxon>
        <taxon>Rhabditida</taxon>
        <taxon>Rhabditina</taxon>
        <taxon>Rhabditomorpha</taxon>
        <taxon>Rhabditoidea</taxon>
        <taxon>Rhabditidae</taxon>
        <taxon>Peloderinae</taxon>
        <taxon>Caenorhabditis</taxon>
    </lineage>
</organism>